<sequence>MSKIPSVNIKELLDAGVHFGHKTSRWNPKMASYIYGERDDVHIIDLRQSVALMSVALNAIYETVKKDGKILFVSTKIQASDIIAEYAEKCGQYYVNHRWLGGMLTNWKTIAGSIEKLNKLDKTLENEEALMGYTKKEILDMSRKKDKLLLSLAGIRNLNSKPDLLVVIDTNKEHIAINEAVKLNVPIVAVVDTNSNPDNVDYPIPGNDDSIRSIRLYCSLFADAALQGLEESMKASGVDMGAMQEHTDKALTSKNVSKLKQAKKFSKTKNIDEETNTEFEQALNDADENKNSDNA</sequence>
<gene>
    <name evidence="1" type="primary">rpsB</name>
    <name type="ordered locus">RMA_0121</name>
</gene>
<accession>A8F0I9</accession>
<evidence type="ECO:0000255" key="1">
    <source>
        <dbReference type="HAMAP-Rule" id="MF_00291"/>
    </source>
</evidence>
<evidence type="ECO:0000256" key="2">
    <source>
        <dbReference type="SAM" id="MobiDB-lite"/>
    </source>
</evidence>
<evidence type="ECO:0000305" key="3"/>
<protein>
    <recommendedName>
        <fullName evidence="1">Small ribosomal subunit protein uS2</fullName>
    </recommendedName>
    <alternativeName>
        <fullName evidence="3">30S ribosomal protein S2</fullName>
    </alternativeName>
</protein>
<keyword id="KW-0687">Ribonucleoprotein</keyword>
<keyword id="KW-0689">Ribosomal protein</keyword>
<proteinExistence type="inferred from homology"/>
<organism>
    <name type="scientific">Rickettsia massiliae (strain Mtu5)</name>
    <dbReference type="NCBI Taxonomy" id="416276"/>
    <lineage>
        <taxon>Bacteria</taxon>
        <taxon>Pseudomonadati</taxon>
        <taxon>Pseudomonadota</taxon>
        <taxon>Alphaproteobacteria</taxon>
        <taxon>Rickettsiales</taxon>
        <taxon>Rickettsiaceae</taxon>
        <taxon>Rickettsieae</taxon>
        <taxon>Rickettsia</taxon>
        <taxon>spotted fever group</taxon>
    </lineage>
</organism>
<name>RS2_RICM5</name>
<feature type="chain" id="PRO_0000352030" description="Small ribosomal subunit protein uS2">
    <location>
        <begin position="1"/>
        <end position="295"/>
    </location>
</feature>
<feature type="region of interest" description="Disordered" evidence="2">
    <location>
        <begin position="263"/>
        <end position="295"/>
    </location>
</feature>
<dbReference type="EMBL" id="CP000683">
    <property type="protein sequence ID" value="ABV84425.1"/>
    <property type="status" value="ALT_INIT"/>
    <property type="molecule type" value="Genomic_DNA"/>
</dbReference>
<dbReference type="RefSeq" id="WP_014365187.1">
    <property type="nucleotide sequence ID" value="NC_009900.1"/>
</dbReference>
<dbReference type="SMR" id="A8F0I9"/>
<dbReference type="KEGG" id="rms:RMA_0121"/>
<dbReference type="HOGENOM" id="CLU_040318_2_1_5"/>
<dbReference type="Proteomes" id="UP000001311">
    <property type="component" value="Chromosome"/>
</dbReference>
<dbReference type="GO" id="GO:0022627">
    <property type="term" value="C:cytosolic small ribosomal subunit"/>
    <property type="evidence" value="ECO:0007669"/>
    <property type="project" value="TreeGrafter"/>
</dbReference>
<dbReference type="GO" id="GO:0003735">
    <property type="term" value="F:structural constituent of ribosome"/>
    <property type="evidence" value="ECO:0007669"/>
    <property type="project" value="InterPro"/>
</dbReference>
<dbReference type="GO" id="GO:0006412">
    <property type="term" value="P:translation"/>
    <property type="evidence" value="ECO:0007669"/>
    <property type="project" value="UniProtKB-UniRule"/>
</dbReference>
<dbReference type="CDD" id="cd01425">
    <property type="entry name" value="RPS2"/>
    <property type="match status" value="1"/>
</dbReference>
<dbReference type="Gene3D" id="3.40.50.10490">
    <property type="entry name" value="Glucose-6-phosphate isomerase like protein, domain 1"/>
    <property type="match status" value="1"/>
</dbReference>
<dbReference type="Gene3D" id="1.10.287.610">
    <property type="entry name" value="Helix hairpin bin"/>
    <property type="match status" value="1"/>
</dbReference>
<dbReference type="HAMAP" id="MF_00291_B">
    <property type="entry name" value="Ribosomal_uS2_B"/>
    <property type="match status" value="1"/>
</dbReference>
<dbReference type="InterPro" id="IPR001865">
    <property type="entry name" value="Ribosomal_uS2"/>
</dbReference>
<dbReference type="InterPro" id="IPR005706">
    <property type="entry name" value="Ribosomal_uS2_bac/mit/plastid"/>
</dbReference>
<dbReference type="InterPro" id="IPR018130">
    <property type="entry name" value="Ribosomal_uS2_CS"/>
</dbReference>
<dbReference type="InterPro" id="IPR023591">
    <property type="entry name" value="Ribosomal_uS2_flav_dom_sf"/>
</dbReference>
<dbReference type="NCBIfam" id="TIGR01011">
    <property type="entry name" value="rpsB_bact"/>
    <property type="match status" value="1"/>
</dbReference>
<dbReference type="PANTHER" id="PTHR12534">
    <property type="entry name" value="30S RIBOSOMAL PROTEIN S2 PROKARYOTIC AND ORGANELLAR"/>
    <property type="match status" value="1"/>
</dbReference>
<dbReference type="PANTHER" id="PTHR12534:SF0">
    <property type="entry name" value="SMALL RIBOSOMAL SUBUNIT PROTEIN US2M"/>
    <property type="match status" value="1"/>
</dbReference>
<dbReference type="Pfam" id="PF00318">
    <property type="entry name" value="Ribosomal_S2"/>
    <property type="match status" value="1"/>
</dbReference>
<dbReference type="PRINTS" id="PR00395">
    <property type="entry name" value="RIBOSOMALS2"/>
</dbReference>
<dbReference type="SUPFAM" id="SSF52313">
    <property type="entry name" value="Ribosomal protein S2"/>
    <property type="match status" value="1"/>
</dbReference>
<dbReference type="PROSITE" id="PS00962">
    <property type="entry name" value="RIBOSOMAL_S2_1"/>
    <property type="match status" value="1"/>
</dbReference>
<dbReference type="PROSITE" id="PS00963">
    <property type="entry name" value="RIBOSOMAL_S2_2"/>
    <property type="match status" value="1"/>
</dbReference>
<reference key="1">
    <citation type="journal article" date="2007" name="Genome Res.">
        <title>Lateral gene transfer between obligate intracellular bacteria: evidence from the Rickettsia massiliae genome.</title>
        <authorList>
            <person name="Blanc G."/>
            <person name="Ogata H."/>
            <person name="Robert C."/>
            <person name="Audic S."/>
            <person name="Claverie J.-M."/>
            <person name="Raoult D."/>
        </authorList>
    </citation>
    <scope>NUCLEOTIDE SEQUENCE [LARGE SCALE GENOMIC DNA]</scope>
    <source>
        <strain>Mtu5</strain>
    </source>
</reference>
<comment type="similarity">
    <text evidence="1">Belongs to the universal ribosomal protein uS2 family.</text>
</comment>
<comment type="sequence caution" evidence="3">
    <conflict type="erroneous initiation">
        <sequence resource="EMBL-CDS" id="ABV84425"/>
    </conflict>
</comment>